<evidence type="ECO:0000255" key="1"/>
<evidence type="ECO:0000305" key="2"/>
<protein>
    <recommendedName>
        <fullName>Protein LpfE</fullName>
    </recommendedName>
</protein>
<proteinExistence type="inferred from homology"/>
<keyword id="KW-0281">Fimbrium</keyword>
<keyword id="KW-1185">Reference proteome</keyword>
<keyword id="KW-0732">Signal</keyword>
<gene>
    <name type="primary">lpfE</name>
    <name type="ordered locus">STM3636</name>
</gene>
<sequence length="175" mass="18419">MKNLHALMPACLLLTASAMAAPSNIGSAGDIHFTITIKAATCELENDSIDVNMETVVLQRPVKVGKELNQKNFSIGLKDCAYATKASVTMDGSPDPTDPSLFALDSGGATGVALKIKTSGGEQQYPSSTDSTPVEHTVWFDGTNKLNYIASYVPVKPDATVGTANATVNFSVTYE</sequence>
<organism>
    <name type="scientific">Salmonella typhimurium (strain LT2 / SGSC1412 / ATCC 700720)</name>
    <dbReference type="NCBI Taxonomy" id="99287"/>
    <lineage>
        <taxon>Bacteria</taxon>
        <taxon>Pseudomonadati</taxon>
        <taxon>Pseudomonadota</taxon>
        <taxon>Gammaproteobacteria</taxon>
        <taxon>Enterobacterales</taxon>
        <taxon>Enterobacteriaceae</taxon>
        <taxon>Salmonella</taxon>
    </lineage>
</organism>
<reference key="1">
    <citation type="journal article" date="1995" name="J. Bacteriol.">
        <title>Identification and sequence analysis of lpfABCDE, a putative fimbrial operon of Salmonella typhimurium.</title>
        <authorList>
            <person name="Baeumler A.J."/>
            <person name="Heffron F."/>
        </authorList>
    </citation>
    <scope>NUCLEOTIDE SEQUENCE [GENOMIC DNA]</scope>
    <source>
        <strain>ATCC 14028 / SGSG 2980 / CDC 6516-60 / NCTC 12023</strain>
    </source>
</reference>
<reference key="2">
    <citation type="journal article" date="2001" name="Nature">
        <title>Complete genome sequence of Salmonella enterica serovar Typhimurium LT2.</title>
        <authorList>
            <person name="McClelland M."/>
            <person name="Sanderson K.E."/>
            <person name="Spieth J."/>
            <person name="Clifton S.W."/>
            <person name="Latreille P."/>
            <person name="Courtney L."/>
            <person name="Porwollik S."/>
            <person name="Ali J."/>
            <person name="Dante M."/>
            <person name="Du F."/>
            <person name="Hou S."/>
            <person name="Layman D."/>
            <person name="Leonard S."/>
            <person name="Nguyen C."/>
            <person name="Scott K."/>
            <person name="Holmes A."/>
            <person name="Grewal N."/>
            <person name="Mulvaney E."/>
            <person name="Ryan E."/>
            <person name="Sun H."/>
            <person name="Florea L."/>
            <person name="Miller W."/>
            <person name="Stoneking T."/>
            <person name="Nhan M."/>
            <person name="Waterston R."/>
            <person name="Wilson R.K."/>
        </authorList>
    </citation>
    <scope>NUCLEOTIDE SEQUENCE [LARGE SCALE GENOMIC DNA]</scope>
    <source>
        <strain>LT2 / SGSC1412 / ATCC 700720</strain>
    </source>
</reference>
<comment type="subcellular location">
    <subcellularLocation>
        <location evidence="2">Fimbrium</location>
    </subcellularLocation>
</comment>
<comment type="similarity">
    <text evidence="2">Belongs to the fimbrial protein family.</text>
</comment>
<name>LPFE_SALTY</name>
<dbReference type="EMBL" id="U18559">
    <property type="protein sequence ID" value="AAA73970.1"/>
    <property type="molecule type" value="Genomic_DNA"/>
</dbReference>
<dbReference type="EMBL" id="AE006468">
    <property type="protein sequence ID" value="AAL22496.1"/>
    <property type="molecule type" value="Genomic_DNA"/>
</dbReference>
<dbReference type="PIR" id="E56271">
    <property type="entry name" value="E56271"/>
</dbReference>
<dbReference type="RefSeq" id="NP_462537.1">
    <property type="nucleotide sequence ID" value="NC_003197.2"/>
</dbReference>
<dbReference type="RefSeq" id="WP_000792957.1">
    <property type="nucleotide sequence ID" value="NC_003197.2"/>
</dbReference>
<dbReference type="SMR" id="P43664"/>
<dbReference type="STRING" id="99287.STM3636"/>
<dbReference type="PaxDb" id="99287-STM3636"/>
<dbReference type="GeneID" id="1255160"/>
<dbReference type="KEGG" id="stm:STM3636"/>
<dbReference type="PATRIC" id="fig|99287.12.peg.3845"/>
<dbReference type="HOGENOM" id="CLU_088965_0_3_6"/>
<dbReference type="OMA" id="MWRNSIR"/>
<dbReference type="PhylomeDB" id="P43664"/>
<dbReference type="BioCyc" id="SENT99287:STM3636-MONOMER"/>
<dbReference type="Proteomes" id="UP000001014">
    <property type="component" value="Chromosome"/>
</dbReference>
<dbReference type="GO" id="GO:0009289">
    <property type="term" value="C:pilus"/>
    <property type="evidence" value="ECO:0000318"/>
    <property type="project" value="GO_Central"/>
</dbReference>
<dbReference type="GO" id="GO:0043709">
    <property type="term" value="P:cell adhesion involved in single-species biofilm formation"/>
    <property type="evidence" value="ECO:0000318"/>
    <property type="project" value="GO_Central"/>
</dbReference>
<dbReference type="Gene3D" id="2.60.40.1090">
    <property type="entry name" value="Fimbrial-type adhesion domain"/>
    <property type="match status" value="1"/>
</dbReference>
<dbReference type="InterPro" id="IPR000259">
    <property type="entry name" value="Adhesion_dom_fimbrial"/>
</dbReference>
<dbReference type="InterPro" id="IPR036937">
    <property type="entry name" value="Adhesion_dom_fimbrial_sf"/>
</dbReference>
<dbReference type="InterPro" id="IPR008966">
    <property type="entry name" value="Adhesion_dom_sf"/>
</dbReference>
<dbReference type="InterPro" id="IPR050263">
    <property type="entry name" value="Bact_Fimbrial_Adh_Pro"/>
</dbReference>
<dbReference type="NCBIfam" id="NF011752">
    <property type="entry name" value="PRK15205.1"/>
    <property type="match status" value="1"/>
</dbReference>
<dbReference type="PANTHER" id="PTHR33420">
    <property type="entry name" value="FIMBRIAL SUBUNIT ELFA-RELATED"/>
    <property type="match status" value="1"/>
</dbReference>
<dbReference type="PANTHER" id="PTHR33420:SF12">
    <property type="entry name" value="FIMBRIN-LIKE PROTEIN FIMI-RELATED"/>
    <property type="match status" value="1"/>
</dbReference>
<dbReference type="Pfam" id="PF00419">
    <property type="entry name" value="Fimbrial"/>
    <property type="match status" value="1"/>
</dbReference>
<dbReference type="SUPFAM" id="SSF49401">
    <property type="entry name" value="Bacterial adhesins"/>
    <property type="match status" value="1"/>
</dbReference>
<accession>P43664</accession>
<feature type="signal peptide" evidence="1">
    <location>
        <begin position="1"/>
        <end position="20"/>
    </location>
</feature>
<feature type="chain" id="PRO_0000009229" description="Protein LpfE">
    <location>
        <begin position="21"/>
        <end position="175"/>
    </location>
</feature>